<name>CA1C_CONLI</name>
<keyword id="KW-0008">Acetylcholine receptor inhibiting toxin</keyword>
<keyword id="KW-0027">Amidation</keyword>
<keyword id="KW-1015">Disulfide bond</keyword>
<keyword id="KW-0528">Neurotoxin</keyword>
<keyword id="KW-0629">Postsynaptic neurotoxin</keyword>
<keyword id="KW-0964">Secreted</keyword>
<keyword id="KW-0800">Toxin</keyword>
<evidence type="ECO:0000269" key="1">
    <source>
    </source>
</evidence>
<evidence type="ECO:0000303" key="2">
    <source>
    </source>
</evidence>
<evidence type="ECO:0000305" key="3"/>
<evidence type="ECO:0000305" key="4">
    <source>
    </source>
</evidence>
<proteinExistence type="evidence at protein level"/>
<comment type="function">
    <text evidence="1">Alpha-conotoxins bind to the nicotinic acetylcholine receptors (nAChR) and inhibit them. This synthetic peptide inhibits rat alpha-6/alpha-3-beta-4 nAChR (IC(50)=3.3 uM).</text>
</comment>
<comment type="subcellular location">
    <subcellularLocation>
        <location evidence="4">Secreted</location>
    </subcellularLocation>
</comment>
<comment type="tissue specificity">
    <text evidence="4">Expressed by the venom gland.</text>
</comment>
<comment type="domain">
    <text evidence="3">The cysteine framework is I (CC-C-C). Alpha4/4 pattern.</text>
</comment>
<comment type="PTM">
    <text evidence="1">The two analogs ([DelQ14]LvIC and [D1G,DelQ14]LvIC) are amidated at their N-terminal Cys.</text>
</comment>
<comment type="miscellaneous">
    <text evidence="1">Negative results: The native synthetic peptide, and its two analogs show little or not inhibition on mouse alpha-1-beta-1-delta-epsilon (CHRNA1-CHRNB1-CHRND-CHRNE), rat alpha-2-beta-2/CHRNA2-CHRNB2, rat alpha-2-beta-4/CHRNA2-CHRNB4, rat alpha-3-beta-2/CHRNA3-CHRNB2, rat alpha-3-beta-4/CHRNA3-CHRNB4, rat alpha-4-beta-2/CHRNA4-CHRNB2, rat alpha-7/CHRNA7, and rat alpha-6/alpha-3-beta-2-beta-3 (CHRNA6/CHRNA3-CHRNB2-CHRNB3) nAChRs (IC(50)&gt;10 uM).</text>
</comment>
<comment type="similarity">
    <text evidence="3">Belongs to the conotoxin A superfamily.</text>
</comment>
<reference key="1">
    <citation type="journal article" date="2023" name="J. Med. Chem.">
        <title>Discovery, characterization, and engineering of LvIC, an alpha4/4-conotoxin that selectively blocks rat alpha6/alpha3beta4 nicotinic acetylcholine receptors.</title>
        <authorList>
            <person name="Zhu X."/>
            <person name="Wang S."/>
            <person name="Kaas Q."/>
            <person name="Yu J."/>
            <person name="Wu Y."/>
            <person name="Harvey P.J."/>
            <person name="Zhangsun D."/>
            <person name="Craik D.J."/>
            <person name="Luo S."/>
        </authorList>
    </citation>
    <scope>NUCLEOTIDE SEQUENCE [GENOMIC DNA]</scope>
    <scope>FUNCTION</scope>
    <scope>PROBABLE AMIDATION AT GLN-35</scope>
    <scope>PROBABLE DISULFIDE BONDS</scope>
    <scope>SYNTHESIS OF 22-35</scope>
    <scope>MUTAGENESIS OF ASP-22 AND GLN-35</scope>
</reference>
<dbReference type="GO" id="GO:0005576">
    <property type="term" value="C:extracellular region"/>
    <property type="evidence" value="ECO:0007669"/>
    <property type="project" value="UniProtKB-SubCell"/>
</dbReference>
<dbReference type="GO" id="GO:0035792">
    <property type="term" value="C:host cell postsynaptic membrane"/>
    <property type="evidence" value="ECO:0007669"/>
    <property type="project" value="UniProtKB-KW"/>
</dbReference>
<dbReference type="GO" id="GO:0030550">
    <property type="term" value="F:acetylcholine receptor inhibitor activity"/>
    <property type="evidence" value="ECO:0007669"/>
    <property type="project" value="UniProtKB-KW"/>
</dbReference>
<dbReference type="GO" id="GO:0090729">
    <property type="term" value="F:toxin activity"/>
    <property type="evidence" value="ECO:0007669"/>
    <property type="project" value="UniProtKB-KW"/>
</dbReference>
<dbReference type="InterPro" id="IPR009958">
    <property type="entry name" value="Conotoxin_a-typ"/>
</dbReference>
<dbReference type="Pfam" id="PF07365">
    <property type="entry name" value="Toxin_8"/>
    <property type="match status" value="1"/>
</dbReference>
<organism>
    <name type="scientific">Conus lividus</name>
    <name type="common">Livid cone</name>
    <dbReference type="NCBI Taxonomy" id="89426"/>
    <lineage>
        <taxon>Eukaryota</taxon>
        <taxon>Metazoa</taxon>
        <taxon>Spiralia</taxon>
        <taxon>Lophotrochozoa</taxon>
        <taxon>Mollusca</taxon>
        <taxon>Gastropoda</taxon>
        <taxon>Caenogastropoda</taxon>
        <taxon>Neogastropoda</taxon>
        <taxon>Conoidea</taxon>
        <taxon>Conidae</taxon>
        <taxon>Conus</taxon>
        <taxon>Lividoconus</taxon>
    </lineage>
</organism>
<feature type="propeptide" id="PRO_0000458355" evidence="4">
    <location>
        <begin position="1" status="less than"/>
        <end position="21"/>
    </location>
</feature>
<feature type="peptide" id="PRO_0000458356" description="Alpha-conotoxin LvIC" evidence="4">
    <location>
        <begin position="22"/>
        <end position="35"/>
    </location>
</feature>
<feature type="modified residue" description="Glutamine amide" evidence="4">
    <location>
        <position position="35"/>
    </location>
</feature>
<feature type="disulfide bond" evidence="4">
    <location>
        <begin position="23"/>
        <end position="29"/>
    </location>
</feature>
<feature type="disulfide bond" evidence="4">
    <location>
        <begin position="24"/>
        <end position="34"/>
    </location>
</feature>
<feature type="mutagenesis site" description="170-fold increase in inhibitory activity toward alpha-6/alpha-3-beta-4, when associated with Gln-35 Del." evidence="1">
    <original>D</original>
    <variation>G</variation>
    <location>
        <position position="22"/>
    </location>
</feature>
<feature type="mutagenesis site" description="10-fold increase in inhibitory activity toward alpha-6/alpha-3-beta-4." evidence="1">
    <location>
        <position position="35"/>
    </location>
</feature>
<feature type="non-terminal residue" evidence="3">
    <location>
        <position position="1"/>
    </location>
</feature>
<accession>P0DX20</accession>
<protein>
    <recommendedName>
        <fullName evidence="2">Alpha-conotoxin LvIC</fullName>
    </recommendedName>
</protein>
<sequence>SNGRNAAAGDKPSYWITLAITDCCANPVCNGKHCQGRR</sequence>